<gene>
    <name type="primary">yhhS</name>
    <name type="ordered locus">b3473</name>
    <name type="ordered locus">JW5945</name>
</gene>
<name>YHHS_ECOLI</name>
<organism>
    <name type="scientific">Escherichia coli (strain K12)</name>
    <dbReference type="NCBI Taxonomy" id="83333"/>
    <lineage>
        <taxon>Bacteria</taxon>
        <taxon>Pseudomonadati</taxon>
        <taxon>Pseudomonadota</taxon>
        <taxon>Gammaproteobacteria</taxon>
        <taxon>Enterobacterales</taxon>
        <taxon>Enterobacteriaceae</taxon>
        <taxon>Escherichia</taxon>
    </lineage>
</organism>
<dbReference type="EMBL" id="U00039">
    <property type="protein sequence ID" value="AAB18448.1"/>
    <property type="status" value="ALT_INIT"/>
    <property type="molecule type" value="Genomic_DNA"/>
</dbReference>
<dbReference type="EMBL" id="U00096">
    <property type="protein sequence ID" value="AAC76498.2"/>
    <property type="molecule type" value="Genomic_DNA"/>
</dbReference>
<dbReference type="EMBL" id="AP009048">
    <property type="protein sequence ID" value="BAE77820.1"/>
    <property type="molecule type" value="Genomic_DNA"/>
</dbReference>
<dbReference type="PIR" id="S47692">
    <property type="entry name" value="S47692"/>
</dbReference>
<dbReference type="RefSeq" id="NP_417930.2">
    <property type="nucleotide sequence ID" value="NC_000913.3"/>
</dbReference>
<dbReference type="RefSeq" id="WP_001300943.1">
    <property type="nucleotide sequence ID" value="NZ_SSZK01000008.1"/>
</dbReference>
<dbReference type="SMR" id="P37621"/>
<dbReference type="BioGRID" id="4263334">
    <property type="interactions" value="147"/>
</dbReference>
<dbReference type="FunCoup" id="P37621">
    <property type="interactions" value="83"/>
</dbReference>
<dbReference type="STRING" id="511145.b3473"/>
<dbReference type="TCDB" id="2.A.1.46.7">
    <property type="family name" value="the major facilitator superfamily (mfs)"/>
</dbReference>
<dbReference type="PaxDb" id="511145-b3473"/>
<dbReference type="EnsemblBacteria" id="AAC76498">
    <property type="protein sequence ID" value="AAC76498"/>
    <property type="gene ID" value="b3473"/>
</dbReference>
<dbReference type="GeneID" id="947982"/>
<dbReference type="KEGG" id="ecj:JW5945"/>
<dbReference type="KEGG" id="eco:b3473"/>
<dbReference type="KEGG" id="ecoc:C3026_18810"/>
<dbReference type="PATRIC" id="fig|511145.12.peg.3572"/>
<dbReference type="EchoBASE" id="EB2133"/>
<dbReference type="eggNOG" id="COG0477">
    <property type="taxonomic scope" value="Bacteria"/>
</dbReference>
<dbReference type="HOGENOM" id="CLU_001265_10_3_6"/>
<dbReference type="InParanoid" id="P37621"/>
<dbReference type="OMA" id="GKVFPHG"/>
<dbReference type="OrthoDB" id="322544at2"/>
<dbReference type="PhylomeDB" id="P37621"/>
<dbReference type="BioCyc" id="EcoCyc:YHHS-MONOMER"/>
<dbReference type="PRO" id="PR:P37621"/>
<dbReference type="Proteomes" id="UP000000625">
    <property type="component" value="Chromosome"/>
</dbReference>
<dbReference type="GO" id="GO:0005886">
    <property type="term" value="C:plasma membrane"/>
    <property type="evidence" value="ECO:0000314"/>
    <property type="project" value="EcoCyc"/>
</dbReference>
<dbReference type="GO" id="GO:0022857">
    <property type="term" value="F:transmembrane transporter activity"/>
    <property type="evidence" value="ECO:0007669"/>
    <property type="project" value="UniProtKB-UniRule"/>
</dbReference>
<dbReference type="CDD" id="cd17489">
    <property type="entry name" value="MFS_YfcJ_like"/>
    <property type="match status" value="1"/>
</dbReference>
<dbReference type="FunFam" id="1.20.1250.20:FF:000155">
    <property type="entry name" value="Uncharacterized MFS-type transporter YhhS"/>
    <property type="match status" value="1"/>
</dbReference>
<dbReference type="Gene3D" id="1.20.1250.20">
    <property type="entry name" value="MFS general substrate transporter like domains"/>
    <property type="match status" value="1"/>
</dbReference>
<dbReference type="HAMAP" id="MF_01118">
    <property type="entry name" value="MFS_YhhS"/>
    <property type="match status" value="1"/>
</dbReference>
<dbReference type="InterPro" id="IPR011701">
    <property type="entry name" value="MFS"/>
</dbReference>
<dbReference type="InterPro" id="IPR020846">
    <property type="entry name" value="MFS_dom"/>
</dbReference>
<dbReference type="InterPro" id="IPR036259">
    <property type="entry name" value="MFS_trans_sf"/>
</dbReference>
<dbReference type="InterPro" id="IPR050171">
    <property type="entry name" value="MFS_Transporters"/>
</dbReference>
<dbReference type="InterPro" id="IPR023008">
    <property type="entry name" value="MFS_YhhS-like"/>
</dbReference>
<dbReference type="NCBIfam" id="NF003477">
    <property type="entry name" value="PRK05122.1"/>
    <property type="match status" value="1"/>
</dbReference>
<dbReference type="PANTHER" id="PTHR23517:SF13">
    <property type="entry name" value="MAJOR FACILITATOR SUPERFAMILY MFS_1"/>
    <property type="match status" value="1"/>
</dbReference>
<dbReference type="PANTHER" id="PTHR23517">
    <property type="entry name" value="RESISTANCE PROTEIN MDTM, PUTATIVE-RELATED-RELATED"/>
    <property type="match status" value="1"/>
</dbReference>
<dbReference type="Pfam" id="PF07690">
    <property type="entry name" value="MFS_1"/>
    <property type="match status" value="1"/>
</dbReference>
<dbReference type="SUPFAM" id="SSF103473">
    <property type="entry name" value="MFS general substrate transporter"/>
    <property type="match status" value="1"/>
</dbReference>
<dbReference type="PROSITE" id="PS50850">
    <property type="entry name" value="MFS"/>
    <property type="match status" value="1"/>
</dbReference>
<protein>
    <recommendedName>
        <fullName evidence="1 5">Uncharacterized MFS-type transporter YhhS</fullName>
    </recommendedName>
</protein>
<accession>P37621</accession>
<accession>Q2M7D6</accession>
<evidence type="ECO:0000255" key="1">
    <source>
        <dbReference type="HAMAP-Rule" id="MF_01118"/>
    </source>
</evidence>
<evidence type="ECO:0000269" key="2">
    <source>
    </source>
</evidence>
<evidence type="ECO:0000269" key="3">
    <source>
    </source>
</evidence>
<evidence type="ECO:0000269" key="4">
    <source>
    </source>
</evidence>
<evidence type="ECO:0000305" key="5"/>
<evidence type="ECO:0000305" key="6">
    <source>
    </source>
</evidence>
<proteinExistence type="evidence at protein level"/>
<feature type="chain" id="PRO_0000087807" description="Uncharacterized MFS-type transporter YhhS">
    <location>
        <begin position="1"/>
        <end position="405"/>
    </location>
</feature>
<feature type="topological domain" description="Cytoplasmic" evidence="5">
    <location>
        <begin position="1"/>
        <end position="18"/>
    </location>
</feature>
<feature type="transmembrane region" description="Helical" evidence="1">
    <location>
        <begin position="19"/>
        <end position="39"/>
    </location>
</feature>
<feature type="topological domain" description="Periplasmic" evidence="5">
    <location>
        <begin position="40"/>
        <end position="46"/>
    </location>
</feature>
<feature type="transmembrane region" description="Helical" evidence="1">
    <location>
        <begin position="47"/>
        <end position="67"/>
    </location>
</feature>
<feature type="topological domain" description="Cytoplasmic" evidence="5">
    <location>
        <begin position="68"/>
        <end position="84"/>
    </location>
</feature>
<feature type="transmembrane region" description="Helical" evidence="1">
    <location>
        <begin position="85"/>
        <end position="105"/>
    </location>
</feature>
<feature type="topological domain" description="Periplasmic" evidence="5">
    <location>
        <position position="106"/>
    </location>
</feature>
<feature type="transmembrane region" description="Helical" evidence="1">
    <location>
        <begin position="107"/>
        <end position="127"/>
    </location>
</feature>
<feature type="topological domain" description="Cytoplasmic" evidence="5">
    <location>
        <begin position="128"/>
        <end position="155"/>
    </location>
</feature>
<feature type="transmembrane region" description="Helical" evidence="1">
    <location>
        <begin position="156"/>
        <end position="176"/>
    </location>
</feature>
<feature type="topological domain" description="Periplasmic" evidence="5">
    <location>
        <position position="177"/>
    </location>
</feature>
<feature type="transmembrane region" description="Helical" evidence="1">
    <location>
        <begin position="178"/>
        <end position="198"/>
    </location>
</feature>
<feature type="topological domain" description="Cytoplasmic" evidence="5">
    <location>
        <begin position="199"/>
        <end position="223"/>
    </location>
</feature>
<feature type="transmembrane region" description="Helical" evidence="1">
    <location>
        <begin position="224"/>
        <end position="244"/>
    </location>
</feature>
<feature type="topological domain" description="Periplasmic" evidence="5">
    <location>
        <begin position="245"/>
        <end position="251"/>
    </location>
</feature>
<feature type="transmembrane region" description="Helical" evidence="1">
    <location>
        <begin position="252"/>
        <end position="272"/>
    </location>
</feature>
<feature type="topological domain" description="Cytoplasmic" evidence="5">
    <location>
        <begin position="273"/>
        <end position="282"/>
    </location>
</feature>
<feature type="transmembrane region" description="Helical" evidence="1">
    <location>
        <begin position="283"/>
        <end position="303"/>
    </location>
</feature>
<feature type="topological domain" description="Periplasmic" evidence="5">
    <location>
        <begin position="304"/>
        <end position="308"/>
    </location>
</feature>
<feature type="transmembrane region" description="Helical" evidence="1">
    <location>
        <begin position="309"/>
        <end position="329"/>
    </location>
</feature>
<feature type="topological domain" description="Cytoplasmic" evidence="5">
    <location>
        <begin position="330"/>
        <end position="343"/>
    </location>
</feature>
<feature type="transmembrane region" description="Helical" evidence="1">
    <location>
        <begin position="344"/>
        <end position="364"/>
    </location>
</feature>
<feature type="topological domain" description="Periplasmic" evidence="5">
    <location>
        <position position="365"/>
    </location>
</feature>
<feature type="transmembrane region" description="Helical" evidence="1">
    <location>
        <begin position="366"/>
        <end position="386"/>
    </location>
</feature>
<feature type="topological domain" description="Cytoplasmic" evidence="2">
    <location>
        <begin position="387"/>
        <end position="405"/>
    </location>
</feature>
<keyword id="KW-0997">Cell inner membrane</keyword>
<keyword id="KW-1003">Cell membrane</keyword>
<keyword id="KW-0472">Membrane</keyword>
<keyword id="KW-1185">Reference proteome</keyword>
<keyword id="KW-0812">Transmembrane</keyword>
<keyword id="KW-1133">Transmembrane helix</keyword>
<keyword id="KW-0813">Transport</keyword>
<comment type="function">
    <text evidence="3 4">Confers high-level resistance to glyphosate when overexpressed (PubMed:22089966). Overexpression has no effect on intracellular arabinose concentrations (PubMed:22952739).</text>
</comment>
<comment type="subcellular location">
    <subcellularLocation>
        <location evidence="1 2">Cell inner membrane</location>
        <topology evidence="1 6">Multi-pass membrane protein</topology>
    </subcellularLocation>
</comment>
<comment type="induction">
    <text evidence="4">Induced by arabinose.</text>
</comment>
<comment type="disruption phenotype">
    <text evidence="4">Deletion increases intracellular arabinose concentrations as compared to the wild type.</text>
</comment>
<comment type="similarity">
    <text evidence="1 5">Belongs to the major facilitator superfamily. YhhS family.</text>
</comment>
<comment type="sequence caution" evidence="5">
    <conflict type="erroneous initiation">
        <sequence resource="EMBL-CDS" id="AAB18448"/>
    </conflict>
    <text>Extended N-terminus.</text>
</comment>
<sequence>MPEPVAEPALNGLRLNLRIVSIVMFNFASYLTIGLPLAVLPGYVHDVMGFSAFWAGLVISLQYFATLLSRPHAGRYADSLGPKKIVVFGLCGCFLSGLGYLTAGLTASLPVISLLLLCLGRVILGIGQSFAGTGSTLWGVGVVGSLHIGRVISWNGIVTYGAMAMGAPLGVVFYHWGGLQALALIIMGVALVAILLAIPRPTVKASKGKPLPFRAVLGRVWLYGMALALASAGFGVIATFITLFYDAKGWDGAAFALTLFSCAFVGTRLLFPNGINRIGGLNVAMICFSVEIIGLLLVGVATMPWMAKIGVLLAGAGFSLVFPALGVVAVKAVPQQNQGAALATYTVFMDLSLGVTGPLAGLVMSWAGVPVIYLAAAGLVAIALLLTWRLKKRPPEHVPEAASSS</sequence>
<reference key="1">
    <citation type="journal article" date="1994" name="Nucleic Acids Res.">
        <title>Analysis of the Escherichia coli genome. V. DNA sequence of the region from 76.0 to 81.5 minutes.</title>
        <authorList>
            <person name="Sofia H.J."/>
            <person name="Burland V."/>
            <person name="Daniels D.L."/>
            <person name="Plunkett G. III"/>
            <person name="Blattner F.R."/>
        </authorList>
    </citation>
    <scope>NUCLEOTIDE SEQUENCE [LARGE SCALE GENOMIC DNA]</scope>
    <source>
        <strain>K12 / MG1655 / ATCC 47076</strain>
    </source>
</reference>
<reference key="2">
    <citation type="journal article" date="1997" name="Science">
        <title>The complete genome sequence of Escherichia coli K-12.</title>
        <authorList>
            <person name="Blattner F.R."/>
            <person name="Plunkett G. III"/>
            <person name="Bloch C.A."/>
            <person name="Perna N.T."/>
            <person name="Burland V."/>
            <person name="Riley M."/>
            <person name="Collado-Vides J."/>
            <person name="Glasner J.D."/>
            <person name="Rode C.K."/>
            <person name="Mayhew G.F."/>
            <person name="Gregor J."/>
            <person name="Davis N.W."/>
            <person name="Kirkpatrick H.A."/>
            <person name="Goeden M.A."/>
            <person name="Rose D.J."/>
            <person name="Mau B."/>
            <person name="Shao Y."/>
        </authorList>
    </citation>
    <scope>NUCLEOTIDE SEQUENCE [LARGE SCALE GENOMIC DNA]</scope>
    <source>
        <strain>K12 / MG1655 / ATCC 47076</strain>
    </source>
</reference>
<reference key="3">
    <citation type="journal article" date="2006" name="Mol. Syst. Biol.">
        <title>Highly accurate genome sequences of Escherichia coli K-12 strains MG1655 and W3110.</title>
        <authorList>
            <person name="Hayashi K."/>
            <person name="Morooka N."/>
            <person name="Yamamoto Y."/>
            <person name="Fujita K."/>
            <person name="Isono K."/>
            <person name="Choi S."/>
            <person name="Ohtsubo E."/>
            <person name="Baba T."/>
            <person name="Wanner B.L."/>
            <person name="Mori H."/>
            <person name="Horiuchi T."/>
        </authorList>
    </citation>
    <scope>NUCLEOTIDE SEQUENCE [LARGE SCALE GENOMIC DNA]</scope>
    <source>
        <strain>K12 / W3110 / ATCC 27325 / DSM 5911</strain>
    </source>
</reference>
<reference key="4">
    <citation type="journal article" date="2005" name="Science">
        <title>Global topology analysis of the Escherichia coli inner membrane proteome.</title>
        <authorList>
            <person name="Daley D.O."/>
            <person name="Rapp M."/>
            <person name="Granseth E."/>
            <person name="Melen K."/>
            <person name="Drew D."/>
            <person name="von Heijne G."/>
        </authorList>
    </citation>
    <scope>SUBCELLULAR LOCATION</scope>
    <scope>TOPOLOGY [LARGE SCALE ANALYSIS]</scope>
    <source>
        <strain>K12 / MG1655 / ATCC 47076</strain>
    </source>
</reference>
<reference key="5">
    <citation type="journal article" date="2012" name="J. Ind. Microbiol. Biotechnol.">
        <title>Bacterial glyphosate resistance conferred by overexpression of an E. coli membrane efflux transporter.</title>
        <authorList>
            <person name="Staub J.M."/>
            <person name="Brand L."/>
            <person name="Tran M."/>
            <person name="Kong Y."/>
            <person name="Rogers S.G."/>
        </authorList>
    </citation>
    <scope>OVEREXPRESSION</scope>
</reference>
<reference key="6">
    <citation type="journal article" date="2012" name="PLoS ONE">
        <title>Identification and analysis of the putative pentose sugar efflux transporters in Escherichia coli.</title>
        <authorList>
            <person name="Koita K."/>
            <person name="Rao C.V."/>
        </authorList>
    </citation>
    <scope>OVEREXPRESSION</scope>
    <scope>INDUCTION</scope>
    <scope>DISRUPTION PHENOTYPE</scope>
</reference>